<accession>Q6FZE1</accession>
<organism>
    <name type="scientific">Bartonella quintana (strain Toulouse)</name>
    <name type="common">Rochalimaea quintana</name>
    <dbReference type="NCBI Taxonomy" id="283165"/>
    <lineage>
        <taxon>Bacteria</taxon>
        <taxon>Pseudomonadati</taxon>
        <taxon>Pseudomonadota</taxon>
        <taxon>Alphaproteobacteria</taxon>
        <taxon>Hyphomicrobiales</taxon>
        <taxon>Bartonellaceae</taxon>
        <taxon>Bartonella</taxon>
    </lineage>
</organism>
<keyword id="KW-0687">Ribonucleoprotein</keyword>
<keyword id="KW-0689">Ribosomal protein</keyword>
<keyword id="KW-0694">RNA-binding</keyword>
<keyword id="KW-0699">rRNA-binding</keyword>
<gene>
    <name evidence="1" type="primary">rplO</name>
    <name type="ordered locus">BQ08040</name>
</gene>
<comment type="function">
    <text evidence="1">Binds to the 23S rRNA.</text>
</comment>
<comment type="subunit">
    <text evidence="1">Part of the 50S ribosomal subunit.</text>
</comment>
<comment type="similarity">
    <text evidence="1">Belongs to the universal ribosomal protein uL15 family.</text>
</comment>
<evidence type="ECO:0000255" key="1">
    <source>
        <dbReference type="HAMAP-Rule" id="MF_01341"/>
    </source>
</evidence>
<evidence type="ECO:0000256" key="2">
    <source>
        <dbReference type="SAM" id="MobiDB-lite"/>
    </source>
</evidence>
<evidence type="ECO:0000305" key="3"/>
<dbReference type="EMBL" id="BX897700">
    <property type="protein sequence ID" value="CAF26287.1"/>
    <property type="molecule type" value="Genomic_DNA"/>
</dbReference>
<dbReference type="RefSeq" id="WP_011179534.1">
    <property type="nucleotide sequence ID" value="NC_005955.1"/>
</dbReference>
<dbReference type="SMR" id="Q6FZE1"/>
<dbReference type="GeneID" id="56532840"/>
<dbReference type="KEGG" id="bqu:BQ08040"/>
<dbReference type="eggNOG" id="COG0200">
    <property type="taxonomic scope" value="Bacteria"/>
</dbReference>
<dbReference type="HOGENOM" id="CLU_055188_4_0_5"/>
<dbReference type="OrthoDB" id="9810293at2"/>
<dbReference type="Proteomes" id="UP000000597">
    <property type="component" value="Chromosome"/>
</dbReference>
<dbReference type="GO" id="GO:0022625">
    <property type="term" value="C:cytosolic large ribosomal subunit"/>
    <property type="evidence" value="ECO:0007669"/>
    <property type="project" value="TreeGrafter"/>
</dbReference>
<dbReference type="GO" id="GO:0019843">
    <property type="term" value="F:rRNA binding"/>
    <property type="evidence" value="ECO:0007669"/>
    <property type="project" value="UniProtKB-UniRule"/>
</dbReference>
<dbReference type="GO" id="GO:0003735">
    <property type="term" value="F:structural constituent of ribosome"/>
    <property type="evidence" value="ECO:0007669"/>
    <property type="project" value="InterPro"/>
</dbReference>
<dbReference type="GO" id="GO:0006412">
    <property type="term" value="P:translation"/>
    <property type="evidence" value="ECO:0007669"/>
    <property type="project" value="UniProtKB-UniRule"/>
</dbReference>
<dbReference type="Gene3D" id="3.100.10.10">
    <property type="match status" value="1"/>
</dbReference>
<dbReference type="HAMAP" id="MF_01341">
    <property type="entry name" value="Ribosomal_uL15"/>
    <property type="match status" value="1"/>
</dbReference>
<dbReference type="InterPro" id="IPR030878">
    <property type="entry name" value="Ribosomal_uL15"/>
</dbReference>
<dbReference type="InterPro" id="IPR021131">
    <property type="entry name" value="Ribosomal_uL15/eL18"/>
</dbReference>
<dbReference type="InterPro" id="IPR036227">
    <property type="entry name" value="Ribosomal_uL15/eL18_sf"/>
</dbReference>
<dbReference type="InterPro" id="IPR005749">
    <property type="entry name" value="Ribosomal_uL15_bac-type"/>
</dbReference>
<dbReference type="NCBIfam" id="TIGR01071">
    <property type="entry name" value="rplO_bact"/>
    <property type="match status" value="1"/>
</dbReference>
<dbReference type="PANTHER" id="PTHR12934">
    <property type="entry name" value="50S RIBOSOMAL PROTEIN L15"/>
    <property type="match status" value="1"/>
</dbReference>
<dbReference type="PANTHER" id="PTHR12934:SF11">
    <property type="entry name" value="LARGE RIBOSOMAL SUBUNIT PROTEIN UL15M"/>
    <property type="match status" value="1"/>
</dbReference>
<dbReference type="Pfam" id="PF00828">
    <property type="entry name" value="Ribosomal_L27A"/>
    <property type="match status" value="1"/>
</dbReference>
<dbReference type="SUPFAM" id="SSF52080">
    <property type="entry name" value="Ribosomal proteins L15p and L18e"/>
    <property type="match status" value="1"/>
</dbReference>
<reference key="1">
    <citation type="journal article" date="2004" name="Proc. Natl. Acad. Sci. U.S.A.">
        <title>The louse-borne human pathogen Bartonella quintana is a genomic derivative of the zoonotic agent Bartonella henselae.</title>
        <authorList>
            <person name="Alsmark U.C.M."/>
            <person name="Frank A.C."/>
            <person name="Karlberg E.O."/>
            <person name="Legault B.-A."/>
            <person name="Ardell D.H."/>
            <person name="Canbaeck B."/>
            <person name="Eriksson A.-S."/>
            <person name="Naeslund A.K."/>
            <person name="Handley S.A."/>
            <person name="Huvet M."/>
            <person name="La Scola B."/>
            <person name="Holmberg M."/>
            <person name="Andersson S.G.E."/>
        </authorList>
    </citation>
    <scope>NUCLEOTIDE SEQUENCE [LARGE SCALE GENOMIC DNA]</scope>
    <source>
        <strain>Toulouse</strain>
    </source>
</reference>
<name>RL15_BARQU</name>
<protein>
    <recommendedName>
        <fullName evidence="1">Large ribosomal subunit protein uL15</fullName>
    </recommendedName>
    <alternativeName>
        <fullName evidence="3">50S ribosomal protein L15</fullName>
    </alternativeName>
</protein>
<proteinExistence type="inferred from homology"/>
<sequence length="154" mass="16700">MKLNELGNCKGATRNRKRVGRGIGSGTGKTSGRGVKGQKSRSGVSLNGFEGGQMPIYRRLPKRGFRNFFAKNYNEVSLGRIQLAVDTGKLDIGKPVDIIVLKEAGIIRRLKDGVRLLSDGELKAKITFNVSYTSKAARIKIEKAGGRVIVPEAV</sequence>
<feature type="chain" id="PRO_0000104680" description="Large ribosomal subunit protein uL15">
    <location>
        <begin position="1"/>
        <end position="154"/>
    </location>
</feature>
<feature type="region of interest" description="Disordered" evidence="2">
    <location>
        <begin position="1"/>
        <end position="44"/>
    </location>
</feature>
<feature type="compositionally biased region" description="Gly residues" evidence="2">
    <location>
        <begin position="21"/>
        <end position="35"/>
    </location>
</feature>